<sequence length="370" mass="40484">MSIHQSPIKRRESKKIWVGNVAVGGDAPISVQSMTNTRTTDVEATVAQIKSLERVGADIVRVSVPTMDAAEAFKVIKQQVNVPLVADIHFDYRIALKVAEYGVDCLRINPGNIGNEERIRAVVDCAKDKNIPIRIGVNAGSLERDLQEKYGEPTPQALLESALRHVDILDRFNFENFKVSVKASDVFLAVESYRLLAKQIVQPLHLGITEAGGARAGSVKSAVGLGLLLSEGIGDTLRISLAADPVEEVKVGFDILKSLRIRSRGINFIACPTCSRQEIDVIATVNALEQRLEDILTPMDVSIIGCVVNGPGEALISDLGVTGSNKMSGFYLDGVRQKERFDNEKLIDQLEAKIRARVAEQHNRIQIEQI</sequence>
<reference key="1">
    <citation type="journal article" date="2008" name="PLoS ONE">
        <title>Genome biology of Actinobacillus pleuropneumoniae JL03, an isolate of serotype 3 prevalent in China.</title>
        <authorList>
            <person name="Xu Z."/>
            <person name="Zhou Y."/>
            <person name="Li L."/>
            <person name="Zhou R."/>
            <person name="Xiao S."/>
            <person name="Wan Y."/>
            <person name="Zhang S."/>
            <person name="Wang K."/>
            <person name="Li W."/>
            <person name="Li L."/>
            <person name="Jin H."/>
            <person name="Kang M."/>
            <person name="Dalai B."/>
            <person name="Li T."/>
            <person name="Liu L."/>
            <person name="Cheng Y."/>
            <person name="Zhang L."/>
            <person name="Xu T."/>
            <person name="Zheng H."/>
            <person name="Pu S."/>
            <person name="Wang B."/>
            <person name="Gu W."/>
            <person name="Zhang X.L."/>
            <person name="Zhu G.-F."/>
            <person name="Wang S."/>
            <person name="Zhao G.-P."/>
            <person name="Chen H."/>
        </authorList>
    </citation>
    <scope>NUCLEOTIDE SEQUENCE [LARGE SCALE GENOMIC DNA]</scope>
    <source>
        <strain>JL03</strain>
    </source>
</reference>
<accession>B0BQB9</accession>
<keyword id="KW-0004">4Fe-4S</keyword>
<keyword id="KW-0408">Iron</keyword>
<keyword id="KW-0411">Iron-sulfur</keyword>
<keyword id="KW-0414">Isoprene biosynthesis</keyword>
<keyword id="KW-0479">Metal-binding</keyword>
<keyword id="KW-0560">Oxidoreductase</keyword>
<comment type="function">
    <text evidence="1">Converts 2C-methyl-D-erythritol 2,4-cyclodiphosphate (ME-2,4cPP) into 1-hydroxy-2-methyl-2-(E)-butenyl 4-diphosphate.</text>
</comment>
<comment type="catalytic activity">
    <reaction evidence="1">
        <text>(2E)-4-hydroxy-3-methylbut-2-enyl diphosphate + oxidized [flavodoxin] + H2O + 2 H(+) = 2-C-methyl-D-erythritol 2,4-cyclic diphosphate + reduced [flavodoxin]</text>
        <dbReference type="Rhea" id="RHEA:43604"/>
        <dbReference type="Rhea" id="RHEA-COMP:10622"/>
        <dbReference type="Rhea" id="RHEA-COMP:10623"/>
        <dbReference type="ChEBI" id="CHEBI:15377"/>
        <dbReference type="ChEBI" id="CHEBI:15378"/>
        <dbReference type="ChEBI" id="CHEBI:57618"/>
        <dbReference type="ChEBI" id="CHEBI:58210"/>
        <dbReference type="ChEBI" id="CHEBI:58483"/>
        <dbReference type="ChEBI" id="CHEBI:128753"/>
        <dbReference type="EC" id="1.17.7.3"/>
    </reaction>
</comment>
<comment type="cofactor">
    <cofactor evidence="1">
        <name>[4Fe-4S] cluster</name>
        <dbReference type="ChEBI" id="CHEBI:49883"/>
    </cofactor>
    <text evidence="1">Binds 1 [4Fe-4S] cluster.</text>
</comment>
<comment type="pathway">
    <text evidence="1">Isoprenoid biosynthesis; isopentenyl diphosphate biosynthesis via DXP pathway; isopentenyl diphosphate from 1-deoxy-D-xylulose 5-phosphate: step 5/6.</text>
</comment>
<comment type="similarity">
    <text evidence="1">Belongs to the IspG family.</text>
</comment>
<proteinExistence type="inferred from homology"/>
<feature type="chain" id="PRO_1000097144" description="4-hydroxy-3-methylbut-2-en-1-yl diphosphate synthase (flavodoxin)">
    <location>
        <begin position="1"/>
        <end position="370"/>
    </location>
</feature>
<feature type="binding site" evidence="1">
    <location>
        <position position="271"/>
    </location>
    <ligand>
        <name>[4Fe-4S] cluster</name>
        <dbReference type="ChEBI" id="CHEBI:49883"/>
    </ligand>
</feature>
<feature type="binding site" evidence="1">
    <location>
        <position position="274"/>
    </location>
    <ligand>
        <name>[4Fe-4S] cluster</name>
        <dbReference type="ChEBI" id="CHEBI:49883"/>
    </ligand>
</feature>
<feature type="binding site" evidence="1">
    <location>
        <position position="306"/>
    </location>
    <ligand>
        <name>[4Fe-4S] cluster</name>
        <dbReference type="ChEBI" id="CHEBI:49883"/>
    </ligand>
</feature>
<feature type="binding site" evidence="1">
    <location>
        <position position="313"/>
    </location>
    <ligand>
        <name>[4Fe-4S] cluster</name>
        <dbReference type="ChEBI" id="CHEBI:49883"/>
    </ligand>
</feature>
<gene>
    <name evidence="1" type="primary">ispG</name>
    <name type="ordered locus">APJL_1198</name>
</gene>
<evidence type="ECO:0000255" key="1">
    <source>
        <dbReference type="HAMAP-Rule" id="MF_00159"/>
    </source>
</evidence>
<name>ISPG_ACTPJ</name>
<dbReference type="EC" id="1.17.7.3" evidence="1"/>
<dbReference type="EMBL" id="CP000687">
    <property type="protein sequence ID" value="ABY69754.1"/>
    <property type="molecule type" value="Genomic_DNA"/>
</dbReference>
<dbReference type="RefSeq" id="WP_005598113.1">
    <property type="nucleotide sequence ID" value="NC_010278.1"/>
</dbReference>
<dbReference type="SMR" id="B0BQB9"/>
<dbReference type="GeneID" id="48599413"/>
<dbReference type="KEGG" id="apj:APJL_1198"/>
<dbReference type="HOGENOM" id="CLU_042258_0_0_6"/>
<dbReference type="UniPathway" id="UPA00056">
    <property type="reaction ID" value="UER00096"/>
</dbReference>
<dbReference type="Proteomes" id="UP000008547">
    <property type="component" value="Chromosome"/>
</dbReference>
<dbReference type="GO" id="GO:0051539">
    <property type="term" value="F:4 iron, 4 sulfur cluster binding"/>
    <property type="evidence" value="ECO:0007669"/>
    <property type="project" value="UniProtKB-UniRule"/>
</dbReference>
<dbReference type="GO" id="GO:0046429">
    <property type="term" value="F:4-hydroxy-3-methylbut-2-en-1-yl diphosphate synthase activity (ferredoxin)"/>
    <property type="evidence" value="ECO:0007669"/>
    <property type="project" value="UniProtKB-UniRule"/>
</dbReference>
<dbReference type="GO" id="GO:0141197">
    <property type="term" value="F:4-hydroxy-3-methylbut-2-enyl-diphosphate synthase activity (flavodoxin)"/>
    <property type="evidence" value="ECO:0007669"/>
    <property type="project" value="UniProtKB-EC"/>
</dbReference>
<dbReference type="GO" id="GO:0005506">
    <property type="term" value="F:iron ion binding"/>
    <property type="evidence" value="ECO:0007669"/>
    <property type="project" value="InterPro"/>
</dbReference>
<dbReference type="GO" id="GO:0019288">
    <property type="term" value="P:isopentenyl diphosphate biosynthetic process, methylerythritol 4-phosphate pathway"/>
    <property type="evidence" value="ECO:0007669"/>
    <property type="project" value="UniProtKB-UniRule"/>
</dbReference>
<dbReference type="GO" id="GO:0016114">
    <property type="term" value="P:terpenoid biosynthetic process"/>
    <property type="evidence" value="ECO:0007669"/>
    <property type="project" value="InterPro"/>
</dbReference>
<dbReference type="FunFam" id="3.20.20.20:FF:000001">
    <property type="entry name" value="4-hydroxy-3-methylbut-2-en-1-yl diphosphate synthase (flavodoxin)"/>
    <property type="match status" value="1"/>
</dbReference>
<dbReference type="Gene3D" id="3.20.20.20">
    <property type="entry name" value="Dihydropteroate synthase-like"/>
    <property type="match status" value="1"/>
</dbReference>
<dbReference type="Gene3D" id="3.30.413.10">
    <property type="entry name" value="Sulfite Reductase Hemoprotein, domain 1"/>
    <property type="match status" value="1"/>
</dbReference>
<dbReference type="HAMAP" id="MF_00159">
    <property type="entry name" value="IspG"/>
    <property type="match status" value="1"/>
</dbReference>
<dbReference type="InterPro" id="IPR011005">
    <property type="entry name" value="Dihydropteroate_synth-like_sf"/>
</dbReference>
<dbReference type="InterPro" id="IPR036849">
    <property type="entry name" value="Enolase-like_C_sf"/>
</dbReference>
<dbReference type="InterPro" id="IPR016425">
    <property type="entry name" value="IspG_bac"/>
</dbReference>
<dbReference type="InterPro" id="IPR004588">
    <property type="entry name" value="IspG_bac-typ"/>
</dbReference>
<dbReference type="InterPro" id="IPR045854">
    <property type="entry name" value="NO2/SO3_Rdtase_4Fe4S_sf"/>
</dbReference>
<dbReference type="NCBIfam" id="TIGR00612">
    <property type="entry name" value="ispG_gcpE"/>
    <property type="match status" value="1"/>
</dbReference>
<dbReference type="NCBIfam" id="NF001540">
    <property type="entry name" value="PRK00366.1"/>
    <property type="match status" value="1"/>
</dbReference>
<dbReference type="PANTHER" id="PTHR30454">
    <property type="entry name" value="4-HYDROXY-3-METHYLBUT-2-EN-1-YL DIPHOSPHATE SYNTHASE"/>
    <property type="match status" value="1"/>
</dbReference>
<dbReference type="PANTHER" id="PTHR30454:SF0">
    <property type="entry name" value="4-HYDROXY-3-METHYLBUT-2-EN-1-YL DIPHOSPHATE SYNTHASE (FERREDOXIN), CHLOROPLASTIC"/>
    <property type="match status" value="1"/>
</dbReference>
<dbReference type="Pfam" id="PF04551">
    <property type="entry name" value="GcpE"/>
    <property type="match status" value="1"/>
</dbReference>
<dbReference type="PIRSF" id="PIRSF004640">
    <property type="entry name" value="IspG"/>
    <property type="match status" value="1"/>
</dbReference>
<dbReference type="SUPFAM" id="SSF51604">
    <property type="entry name" value="Enolase C-terminal domain-like"/>
    <property type="match status" value="1"/>
</dbReference>
<dbReference type="SUPFAM" id="SSF56014">
    <property type="entry name" value="Nitrite and sulphite reductase 4Fe-4S domain-like"/>
    <property type="match status" value="1"/>
</dbReference>
<protein>
    <recommendedName>
        <fullName evidence="1">4-hydroxy-3-methylbut-2-en-1-yl diphosphate synthase (flavodoxin)</fullName>
        <ecNumber evidence="1">1.17.7.3</ecNumber>
    </recommendedName>
    <alternativeName>
        <fullName evidence="1">1-hydroxy-2-methyl-2-(E)-butenyl 4-diphosphate synthase</fullName>
    </alternativeName>
</protein>
<organism>
    <name type="scientific">Actinobacillus pleuropneumoniae serotype 3 (strain JL03)</name>
    <dbReference type="NCBI Taxonomy" id="434271"/>
    <lineage>
        <taxon>Bacteria</taxon>
        <taxon>Pseudomonadati</taxon>
        <taxon>Pseudomonadota</taxon>
        <taxon>Gammaproteobacteria</taxon>
        <taxon>Pasteurellales</taxon>
        <taxon>Pasteurellaceae</taxon>
        <taxon>Actinobacillus</taxon>
    </lineage>
</organism>